<evidence type="ECO:0000255" key="1">
    <source>
        <dbReference type="HAMAP-Rule" id="MF_00238"/>
    </source>
</evidence>
<protein>
    <recommendedName>
        <fullName evidence="1">Cytidylate kinase</fullName>
        <shortName evidence="1">CK</shortName>
        <ecNumber evidence="1">2.7.4.25</ecNumber>
    </recommendedName>
    <alternativeName>
        <fullName evidence="1">Cytidine monophosphate kinase</fullName>
        <shortName evidence="1">CMP kinase</shortName>
    </alternativeName>
</protein>
<accession>A1KUC8</accession>
<comment type="catalytic activity">
    <reaction evidence="1">
        <text>CMP + ATP = CDP + ADP</text>
        <dbReference type="Rhea" id="RHEA:11600"/>
        <dbReference type="ChEBI" id="CHEBI:30616"/>
        <dbReference type="ChEBI" id="CHEBI:58069"/>
        <dbReference type="ChEBI" id="CHEBI:60377"/>
        <dbReference type="ChEBI" id="CHEBI:456216"/>
        <dbReference type="EC" id="2.7.4.25"/>
    </reaction>
</comment>
<comment type="catalytic activity">
    <reaction evidence="1">
        <text>dCMP + ATP = dCDP + ADP</text>
        <dbReference type="Rhea" id="RHEA:25094"/>
        <dbReference type="ChEBI" id="CHEBI:30616"/>
        <dbReference type="ChEBI" id="CHEBI:57566"/>
        <dbReference type="ChEBI" id="CHEBI:58593"/>
        <dbReference type="ChEBI" id="CHEBI:456216"/>
        <dbReference type="EC" id="2.7.4.25"/>
    </reaction>
</comment>
<comment type="subcellular location">
    <subcellularLocation>
        <location evidence="1">Cytoplasm</location>
    </subcellularLocation>
</comment>
<comment type="similarity">
    <text evidence="1">Belongs to the cytidylate kinase family. Type 1 subfamily.</text>
</comment>
<reference key="1">
    <citation type="journal article" date="2007" name="PLoS Genet.">
        <title>Meningococcal genetic variation mechanisms viewed through comparative analysis of serogroup C strain FAM18.</title>
        <authorList>
            <person name="Bentley S.D."/>
            <person name="Vernikos G.S."/>
            <person name="Snyder L.A.S."/>
            <person name="Churcher C."/>
            <person name="Arrowsmith C."/>
            <person name="Chillingworth T."/>
            <person name="Cronin A."/>
            <person name="Davis P.H."/>
            <person name="Holroyd N.E."/>
            <person name="Jagels K."/>
            <person name="Maddison M."/>
            <person name="Moule S."/>
            <person name="Rabbinowitsch E."/>
            <person name="Sharp S."/>
            <person name="Unwin L."/>
            <person name="Whitehead S."/>
            <person name="Quail M.A."/>
            <person name="Achtman M."/>
            <person name="Barrell B.G."/>
            <person name="Saunders N.J."/>
            <person name="Parkhill J."/>
        </authorList>
    </citation>
    <scope>NUCLEOTIDE SEQUENCE [LARGE SCALE GENOMIC DNA]</scope>
    <source>
        <strain>ATCC 700532 / DSM 15464 / FAM18</strain>
    </source>
</reference>
<proteinExistence type="inferred from homology"/>
<name>KCY_NEIMF</name>
<sequence length="218" mass="23762">MNRQKVIAIDGPGASGKGTVAARVAAALGYDYLDTGALYRLTALYAQKQGVGWHDEENVSELAKKLPAVFSGSRILLGGEDVSDGIRTEAIGMGASAVAQLPKVRAALLQRQRDFLTEKGLVADGRDTGSVVFPQAELKIFLTAESKIRAERRAKQIGIPCEGLAFERILSDIEARDEADRNRKVAPLKQQPDALLLDTSRLTIEETVKKVLDWYREV</sequence>
<organism>
    <name type="scientific">Neisseria meningitidis serogroup C / serotype 2a (strain ATCC 700532 / DSM 15464 / FAM18)</name>
    <dbReference type="NCBI Taxonomy" id="272831"/>
    <lineage>
        <taxon>Bacteria</taxon>
        <taxon>Pseudomonadati</taxon>
        <taxon>Pseudomonadota</taxon>
        <taxon>Betaproteobacteria</taxon>
        <taxon>Neisseriales</taxon>
        <taxon>Neisseriaceae</taxon>
        <taxon>Neisseria</taxon>
    </lineage>
</organism>
<feature type="chain" id="PRO_1000048241" description="Cytidylate kinase">
    <location>
        <begin position="1"/>
        <end position="218"/>
    </location>
</feature>
<feature type="binding site" evidence="1">
    <location>
        <begin position="11"/>
        <end position="19"/>
    </location>
    <ligand>
        <name>ATP</name>
        <dbReference type="ChEBI" id="CHEBI:30616"/>
    </ligand>
</feature>
<gene>
    <name evidence="1" type="primary">cmk</name>
    <name type="ordered locus">NMC1237</name>
</gene>
<dbReference type="EC" id="2.7.4.25" evidence="1"/>
<dbReference type="EMBL" id="AM421808">
    <property type="protein sequence ID" value="CAM10471.1"/>
    <property type="molecule type" value="Genomic_DNA"/>
</dbReference>
<dbReference type="RefSeq" id="WP_002224491.1">
    <property type="nucleotide sequence ID" value="NC_008767.1"/>
</dbReference>
<dbReference type="SMR" id="A1KUC8"/>
<dbReference type="KEGG" id="nmc:NMC1237"/>
<dbReference type="HOGENOM" id="CLU_079959_2_0_4"/>
<dbReference type="Proteomes" id="UP000002286">
    <property type="component" value="Chromosome"/>
</dbReference>
<dbReference type="GO" id="GO:0005829">
    <property type="term" value="C:cytosol"/>
    <property type="evidence" value="ECO:0007669"/>
    <property type="project" value="TreeGrafter"/>
</dbReference>
<dbReference type="GO" id="GO:0005524">
    <property type="term" value="F:ATP binding"/>
    <property type="evidence" value="ECO:0007669"/>
    <property type="project" value="UniProtKB-UniRule"/>
</dbReference>
<dbReference type="GO" id="GO:0036430">
    <property type="term" value="F:CMP kinase activity"/>
    <property type="evidence" value="ECO:0007669"/>
    <property type="project" value="RHEA"/>
</dbReference>
<dbReference type="GO" id="GO:0036431">
    <property type="term" value="F:dCMP kinase activity"/>
    <property type="evidence" value="ECO:0007669"/>
    <property type="project" value="RHEA"/>
</dbReference>
<dbReference type="GO" id="GO:0015949">
    <property type="term" value="P:nucleobase-containing small molecule interconversion"/>
    <property type="evidence" value="ECO:0007669"/>
    <property type="project" value="TreeGrafter"/>
</dbReference>
<dbReference type="GO" id="GO:0006220">
    <property type="term" value="P:pyrimidine nucleotide metabolic process"/>
    <property type="evidence" value="ECO:0007669"/>
    <property type="project" value="UniProtKB-UniRule"/>
</dbReference>
<dbReference type="CDD" id="cd02020">
    <property type="entry name" value="CMPK"/>
    <property type="match status" value="1"/>
</dbReference>
<dbReference type="FunFam" id="3.40.50.300:FF:002405">
    <property type="entry name" value="Cytidylate kinase"/>
    <property type="match status" value="1"/>
</dbReference>
<dbReference type="Gene3D" id="3.40.50.300">
    <property type="entry name" value="P-loop containing nucleotide triphosphate hydrolases"/>
    <property type="match status" value="1"/>
</dbReference>
<dbReference type="HAMAP" id="MF_00238">
    <property type="entry name" value="Cytidyl_kinase_type1"/>
    <property type="match status" value="1"/>
</dbReference>
<dbReference type="InterPro" id="IPR003136">
    <property type="entry name" value="Cytidylate_kin"/>
</dbReference>
<dbReference type="InterPro" id="IPR011994">
    <property type="entry name" value="Cytidylate_kinase_dom"/>
</dbReference>
<dbReference type="InterPro" id="IPR027417">
    <property type="entry name" value="P-loop_NTPase"/>
</dbReference>
<dbReference type="NCBIfam" id="TIGR00017">
    <property type="entry name" value="cmk"/>
    <property type="match status" value="1"/>
</dbReference>
<dbReference type="PANTHER" id="PTHR21299:SF2">
    <property type="entry name" value="CYTIDYLATE KINASE"/>
    <property type="match status" value="1"/>
</dbReference>
<dbReference type="PANTHER" id="PTHR21299">
    <property type="entry name" value="CYTIDYLATE KINASE/PANTOATE-BETA-ALANINE LIGASE"/>
    <property type="match status" value="1"/>
</dbReference>
<dbReference type="Pfam" id="PF02224">
    <property type="entry name" value="Cytidylate_kin"/>
    <property type="match status" value="1"/>
</dbReference>
<dbReference type="SUPFAM" id="SSF52540">
    <property type="entry name" value="P-loop containing nucleoside triphosphate hydrolases"/>
    <property type="match status" value="1"/>
</dbReference>
<keyword id="KW-0067">ATP-binding</keyword>
<keyword id="KW-0963">Cytoplasm</keyword>
<keyword id="KW-0418">Kinase</keyword>
<keyword id="KW-0547">Nucleotide-binding</keyword>
<keyword id="KW-0808">Transferase</keyword>